<accession>Q05054</accession>
<evidence type="ECO:0000250" key="1"/>
<evidence type="ECO:0000256" key="2">
    <source>
        <dbReference type="SAM" id="MobiDB-lite"/>
    </source>
</evidence>
<evidence type="ECO:0000305" key="3"/>
<organismHost>
    <name type="scientific">Alopecurus aequalis</name>
    <dbReference type="NCBI Taxonomy" id="114194"/>
</organismHost>
<organismHost>
    <name type="scientific">Echinochloa crus-galli</name>
    <name type="common">Barnyard grass</name>
    <name type="synonym">Panicum crus-galli</name>
    <dbReference type="NCBI Taxonomy" id="90397"/>
</organismHost>
<organismHost>
    <name type="scientific">Nephotettix cincticeps</name>
    <name type="common">Green rice leafhopper</name>
    <name type="synonym">Selenocephalus cincticeps</name>
    <dbReference type="NCBI Taxonomy" id="94400"/>
</organismHost>
<organismHost>
    <name type="scientific">Oryza sativa</name>
    <name type="common">Rice</name>
    <dbReference type="NCBI Taxonomy" id="4530"/>
</organismHost>
<organismHost>
    <name type="scientific">Paspalum</name>
    <dbReference type="NCBI Taxonomy" id="147271"/>
</organismHost>
<feature type="chain" id="PRO_0000222802" description="Non-structural protein 12A">
    <location>
        <begin position="1"/>
        <end position="312"/>
    </location>
</feature>
<feature type="region of interest" description="Disordered" evidence="2">
    <location>
        <begin position="1"/>
        <end position="37"/>
    </location>
</feature>
<feature type="region of interest" description="Disordered" evidence="2">
    <location>
        <begin position="62"/>
        <end position="99"/>
    </location>
</feature>
<feature type="region of interest" description="Disordered" evidence="2">
    <location>
        <begin position="111"/>
        <end position="161"/>
    </location>
</feature>
<feature type="compositionally biased region" description="Low complexity" evidence="2">
    <location>
        <begin position="1"/>
        <end position="23"/>
    </location>
</feature>
<feature type="compositionally biased region" description="Basic and acidic residues" evidence="2">
    <location>
        <begin position="63"/>
        <end position="77"/>
    </location>
</feature>
<feature type="compositionally biased region" description="Polar residues" evidence="2">
    <location>
        <begin position="78"/>
        <end position="98"/>
    </location>
</feature>
<feature type="compositionally biased region" description="Basic and acidic residues" evidence="2">
    <location>
        <begin position="122"/>
        <end position="134"/>
    </location>
</feature>
<name>NSP12_RDVA</name>
<sequence length="312" mass="33920">MFKSGSGSLKRSGSISSVKSFSGDSEKGLPPISRGSVSIASQNSEPLIVPASSSSFAATSDFVPEKTKSEGNLKDKSSVITGNFGSSGPINAHTNQNADGDRLVENLLLKESSKGRGSGTSDARHTATDSRLSQEVKQSFSEENAGGNDLNTGRGSHGTGDGVEQHYKFDCEEGMSAYHKRVVDTFFKYFEYSAEDGHSTLYSDVMFLSGHGDLGLLVMSRYQELMTLRVRSAIYGIFCYLQALTAYLTYFDAKVGQAIMLDEELEKYEIRLDVAQDDDPIVFQITTGVFTSGVAHDLRKLTQILEAFSLER</sequence>
<protein>
    <recommendedName>
        <fullName>Non-structural protein 12A</fullName>
        <shortName>Pns12A</shortName>
    </recommendedName>
</protein>
<organism>
    <name type="scientific">Rice dwarf virus (isolate Akita)</name>
    <name type="common">RDV</name>
    <dbReference type="NCBI Taxonomy" id="142803"/>
    <lineage>
        <taxon>Viruses</taxon>
        <taxon>Riboviria</taxon>
        <taxon>Orthornavirae</taxon>
        <taxon>Duplornaviricota</taxon>
        <taxon>Resentoviricetes</taxon>
        <taxon>Reovirales</taxon>
        <taxon>Sedoreoviridae</taxon>
        <taxon>Phytoreovirus</taxon>
        <taxon>Rice dwarf virus</taxon>
    </lineage>
</organism>
<dbReference type="EMBL" id="D90200">
    <property type="protein sequence ID" value="BAA14223.1"/>
    <property type="molecule type" value="Genomic_RNA"/>
</dbReference>
<dbReference type="PIR" id="A44219">
    <property type="entry name" value="A44219"/>
</dbReference>
<dbReference type="GO" id="GO:0030430">
    <property type="term" value="C:host cell cytoplasm"/>
    <property type="evidence" value="ECO:0007669"/>
    <property type="project" value="UniProtKB-SubCell"/>
</dbReference>
<keyword id="KW-1035">Host cytoplasm</keyword>
<reference key="1">
    <citation type="journal article" date="1992" name="Virology">
        <title>Rice dwarf phytoreovirus segment S12 transcript is tricistronic in vitro.</title>
        <authorList>
            <person name="Suzuki N."/>
            <person name="Sugawara M."/>
            <person name="Kusano T."/>
        </authorList>
    </citation>
    <scope>NUCLEOTIDE SEQUENCE [GENOMIC RNA]</scope>
</reference>
<proteinExistence type="inferred from homology"/>
<comment type="function">
    <text evidence="1">Constituent of viral factories. Binds to ssRNA and dsRNA (By similarity).</text>
</comment>
<comment type="subcellular location">
    <subcellularLocation>
        <location evidence="1">Host cytoplasm</location>
    </subcellularLocation>
    <text evidence="1">Constituent of spherical cytoplasmic structures, called virus factories, that appear early after infection and are the site of viral replication and packaging.</text>
</comment>
<comment type="similarity">
    <text evidence="3">Belongs to the phytoreovirus non-structural protein Pns12A family.</text>
</comment>